<sequence>MKLHIVAVGHKMPGWIASGFDEYAKRMPPELRIELREVKPELRSGSRTADSVMAAEQQRIEAALPKNARVVALDERGRDWTTMQLAQALPAWQQDGRDVAFVIGGADGLAPALKSRAELLLRVSSLTLPHGMVRVLLAEQLYRAWSITQNHPYHRA</sequence>
<reference key="1">
    <citation type="journal article" date="2010" name="Genome Biol. Evol.">
        <title>Continuing evolution of Burkholderia mallei through genome reduction and large-scale rearrangements.</title>
        <authorList>
            <person name="Losada L."/>
            <person name="Ronning C.M."/>
            <person name="DeShazer D."/>
            <person name="Woods D."/>
            <person name="Fedorova N."/>
            <person name="Kim H.S."/>
            <person name="Shabalina S.A."/>
            <person name="Pearson T.R."/>
            <person name="Brinkac L."/>
            <person name="Tan P."/>
            <person name="Nandi T."/>
            <person name="Crabtree J."/>
            <person name="Badger J."/>
            <person name="Beckstrom-Sternberg S."/>
            <person name="Saqib M."/>
            <person name="Schutzer S.E."/>
            <person name="Keim P."/>
            <person name="Nierman W.C."/>
        </authorList>
    </citation>
    <scope>NUCLEOTIDE SEQUENCE [LARGE SCALE GENOMIC DNA]</scope>
    <source>
        <strain>NCTC 10247</strain>
    </source>
</reference>
<keyword id="KW-0963">Cytoplasm</keyword>
<keyword id="KW-0489">Methyltransferase</keyword>
<keyword id="KW-0698">rRNA processing</keyword>
<keyword id="KW-0949">S-adenosyl-L-methionine</keyword>
<keyword id="KW-0808">Transferase</keyword>
<gene>
    <name evidence="1" type="primary">rlmH</name>
    <name type="ordered locus">BMA10247_0353</name>
</gene>
<organism>
    <name type="scientific">Burkholderia mallei (strain NCTC 10247)</name>
    <dbReference type="NCBI Taxonomy" id="320389"/>
    <lineage>
        <taxon>Bacteria</taxon>
        <taxon>Pseudomonadati</taxon>
        <taxon>Pseudomonadota</taxon>
        <taxon>Betaproteobacteria</taxon>
        <taxon>Burkholderiales</taxon>
        <taxon>Burkholderiaceae</taxon>
        <taxon>Burkholderia</taxon>
        <taxon>pseudomallei group</taxon>
    </lineage>
</organism>
<dbReference type="EC" id="2.1.1.177" evidence="1"/>
<dbReference type="EMBL" id="CP000548">
    <property type="protein sequence ID" value="ABO04098.1"/>
    <property type="molecule type" value="Genomic_DNA"/>
</dbReference>
<dbReference type="RefSeq" id="WP_004186098.1">
    <property type="nucleotide sequence ID" value="NZ_CP007802.1"/>
</dbReference>
<dbReference type="SMR" id="A3MI42"/>
<dbReference type="GeneID" id="93059640"/>
<dbReference type="KEGG" id="bmaz:BM44_2654"/>
<dbReference type="KEGG" id="bmn:BMA10247_0353"/>
<dbReference type="PATRIC" id="fig|320389.8.peg.2994"/>
<dbReference type="GO" id="GO:0005737">
    <property type="term" value="C:cytoplasm"/>
    <property type="evidence" value="ECO:0007669"/>
    <property type="project" value="UniProtKB-SubCell"/>
</dbReference>
<dbReference type="GO" id="GO:0070038">
    <property type="term" value="F:rRNA (pseudouridine-N3-)-methyltransferase activity"/>
    <property type="evidence" value="ECO:0007669"/>
    <property type="project" value="UniProtKB-UniRule"/>
</dbReference>
<dbReference type="CDD" id="cd18081">
    <property type="entry name" value="RlmH-like"/>
    <property type="match status" value="1"/>
</dbReference>
<dbReference type="Gene3D" id="3.40.1280.10">
    <property type="match status" value="1"/>
</dbReference>
<dbReference type="HAMAP" id="MF_00658">
    <property type="entry name" value="23SrRNA_methyltr_H"/>
    <property type="match status" value="1"/>
</dbReference>
<dbReference type="InterPro" id="IPR029028">
    <property type="entry name" value="Alpha/beta_knot_MTases"/>
</dbReference>
<dbReference type="InterPro" id="IPR003742">
    <property type="entry name" value="RlmH-like"/>
</dbReference>
<dbReference type="InterPro" id="IPR029026">
    <property type="entry name" value="tRNA_m1G_MTases_N"/>
</dbReference>
<dbReference type="NCBIfam" id="NF000986">
    <property type="entry name" value="PRK00103.1-4"/>
    <property type="match status" value="1"/>
</dbReference>
<dbReference type="NCBIfam" id="TIGR00246">
    <property type="entry name" value="tRNA_RlmH_YbeA"/>
    <property type="match status" value="1"/>
</dbReference>
<dbReference type="PANTHER" id="PTHR33603">
    <property type="entry name" value="METHYLTRANSFERASE"/>
    <property type="match status" value="1"/>
</dbReference>
<dbReference type="PANTHER" id="PTHR33603:SF1">
    <property type="entry name" value="RIBOSOMAL RNA LARGE SUBUNIT METHYLTRANSFERASE H"/>
    <property type="match status" value="1"/>
</dbReference>
<dbReference type="Pfam" id="PF02590">
    <property type="entry name" value="SPOUT_MTase"/>
    <property type="match status" value="1"/>
</dbReference>
<dbReference type="PIRSF" id="PIRSF004505">
    <property type="entry name" value="MT_bac"/>
    <property type="match status" value="1"/>
</dbReference>
<dbReference type="SUPFAM" id="SSF75217">
    <property type="entry name" value="alpha/beta knot"/>
    <property type="match status" value="1"/>
</dbReference>
<proteinExistence type="inferred from homology"/>
<feature type="chain" id="PRO_1000061764" description="Ribosomal RNA large subunit methyltransferase H">
    <location>
        <begin position="1"/>
        <end position="156"/>
    </location>
</feature>
<feature type="binding site" evidence="1">
    <location>
        <position position="73"/>
    </location>
    <ligand>
        <name>S-adenosyl-L-methionine</name>
        <dbReference type="ChEBI" id="CHEBI:59789"/>
    </ligand>
</feature>
<feature type="binding site" evidence="1">
    <location>
        <position position="104"/>
    </location>
    <ligand>
        <name>S-adenosyl-L-methionine</name>
        <dbReference type="ChEBI" id="CHEBI:59789"/>
    </ligand>
</feature>
<feature type="binding site" evidence="1">
    <location>
        <begin position="123"/>
        <end position="128"/>
    </location>
    <ligand>
        <name>S-adenosyl-L-methionine</name>
        <dbReference type="ChEBI" id="CHEBI:59789"/>
    </ligand>
</feature>
<comment type="function">
    <text evidence="1">Specifically methylates the pseudouridine at position 1915 (m3Psi1915) in 23S rRNA.</text>
</comment>
<comment type="catalytic activity">
    <reaction evidence="1">
        <text>pseudouridine(1915) in 23S rRNA + S-adenosyl-L-methionine = N(3)-methylpseudouridine(1915) in 23S rRNA + S-adenosyl-L-homocysteine + H(+)</text>
        <dbReference type="Rhea" id="RHEA:42752"/>
        <dbReference type="Rhea" id="RHEA-COMP:10221"/>
        <dbReference type="Rhea" id="RHEA-COMP:10222"/>
        <dbReference type="ChEBI" id="CHEBI:15378"/>
        <dbReference type="ChEBI" id="CHEBI:57856"/>
        <dbReference type="ChEBI" id="CHEBI:59789"/>
        <dbReference type="ChEBI" id="CHEBI:65314"/>
        <dbReference type="ChEBI" id="CHEBI:74486"/>
        <dbReference type="EC" id="2.1.1.177"/>
    </reaction>
</comment>
<comment type="subunit">
    <text evidence="1">Homodimer.</text>
</comment>
<comment type="subcellular location">
    <subcellularLocation>
        <location evidence="1">Cytoplasm</location>
    </subcellularLocation>
</comment>
<comment type="similarity">
    <text evidence="1">Belongs to the RNA methyltransferase RlmH family.</text>
</comment>
<accession>A3MI42</accession>
<protein>
    <recommendedName>
        <fullName evidence="1">Ribosomal RNA large subunit methyltransferase H</fullName>
        <ecNumber evidence="1">2.1.1.177</ecNumber>
    </recommendedName>
    <alternativeName>
        <fullName evidence="1">23S rRNA (pseudouridine1915-N3)-methyltransferase</fullName>
    </alternativeName>
    <alternativeName>
        <fullName evidence="1">23S rRNA m3Psi1915 methyltransferase</fullName>
    </alternativeName>
    <alternativeName>
        <fullName evidence="1">rRNA (pseudouridine-N3-)-methyltransferase RlmH</fullName>
    </alternativeName>
</protein>
<evidence type="ECO:0000255" key="1">
    <source>
        <dbReference type="HAMAP-Rule" id="MF_00658"/>
    </source>
</evidence>
<name>RLMH_BURM7</name>